<reference key="1">
    <citation type="journal article" date="2004" name="Nat. Genet.">
        <title>Evidence in the Legionella pneumophila genome for exploitation of host cell functions and high genome plasticity.</title>
        <authorList>
            <person name="Cazalet C."/>
            <person name="Rusniok C."/>
            <person name="Brueggemann H."/>
            <person name="Zidane N."/>
            <person name="Magnier A."/>
            <person name="Ma L."/>
            <person name="Tichit M."/>
            <person name="Jarraud S."/>
            <person name="Bouchier C."/>
            <person name="Vandenesch F."/>
            <person name="Kunst F."/>
            <person name="Etienne J."/>
            <person name="Glaser P."/>
            <person name="Buchrieser C."/>
        </authorList>
    </citation>
    <scope>NUCLEOTIDE SEQUENCE [LARGE SCALE GENOMIC DNA]</scope>
    <source>
        <strain>Lens</strain>
    </source>
</reference>
<dbReference type="EMBL" id="CR628337">
    <property type="protein sequence ID" value="CAH14239.1"/>
    <property type="molecule type" value="Genomic_DNA"/>
</dbReference>
<dbReference type="RefSeq" id="WP_010945771.1">
    <property type="nucleotide sequence ID" value="NC_006369.1"/>
</dbReference>
<dbReference type="SMR" id="Q5X0L0"/>
<dbReference type="GeneID" id="57034015"/>
<dbReference type="KEGG" id="lpf:lpl0009"/>
<dbReference type="LegioList" id="lpl0009"/>
<dbReference type="HOGENOM" id="CLU_113688_2_2_6"/>
<dbReference type="Proteomes" id="UP000002517">
    <property type="component" value="Chromosome"/>
</dbReference>
<dbReference type="GO" id="GO:0005829">
    <property type="term" value="C:cytosol"/>
    <property type="evidence" value="ECO:0007669"/>
    <property type="project" value="TreeGrafter"/>
</dbReference>
<dbReference type="GO" id="GO:0003723">
    <property type="term" value="F:RNA binding"/>
    <property type="evidence" value="ECO:0007669"/>
    <property type="project" value="UniProtKB-UniRule"/>
</dbReference>
<dbReference type="GO" id="GO:0006355">
    <property type="term" value="P:regulation of DNA-templated transcription"/>
    <property type="evidence" value="ECO:0007669"/>
    <property type="project" value="InterPro"/>
</dbReference>
<dbReference type="GO" id="GO:0043487">
    <property type="term" value="P:regulation of RNA stability"/>
    <property type="evidence" value="ECO:0007669"/>
    <property type="project" value="TreeGrafter"/>
</dbReference>
<dbReference type="GO" id="GO:0045974">
    <property type="term" value="P:regulation of translation, ncRNA-mediated"/>
    <property type="evidence" value="ECO:0007669"/>
    <property type="project" value="TreeGrafter"/>
</dbReference>
<dbReference type="CDD" id="cd01716">
    <property type="entry name" value="Hfq"/>
    <property type="match status" value="1"/>
</dbReference>
<dbReference type="FunFam" id="2.30.30.100:FF:000001">
    <property type="entry name" value="RNA-binding protein Hfq"/>
    <property type="match status" value="1"/>
</dbReference>
<dbReference type="Gene3D" id="2.30.30.100">
    <property type="match status" value="1"/>
</dbReference>
<dbReference type="HAMAP" id="MF_00436">
    <property type="entry name" value="Hfq"/>
    <property type="match status" value="1"/>
</dbReference>
<dbReference type="InterPro" id="IPR005001">
    <property type="entry name" value="Hfq"/>
</dbReference>
<dbReference type="InterPro" id="IPR010920">
    <property type="entry name" value="LSM_dom_sf"/>
</dbReference>
<dbReference type="InterPro" id="IPR047575">
    <property type="entry name" value="Sm"/>
</dbReference>
<dbReference type="NCBIfam" id="TIGR02383">
    <property type="entry name" value="Hfq"/>
    <property type="match status" value="1"/>
</dbReference>
<dbReference type="NCBIfam" id="NF001602">
    <property type="entry name" value="PRK00395.1"/>
    <property type="match status" value="1"/>
</dbReference>
<dbReference type="PANTHER" id="PTHR34772">
    <property type="entry name" value="RNA-BINDING PROTEIN HFQ"/>
    <property type="match status" value="1"/>
</dbReference>
<dbReference type="PANTHER" id="PTHR34772:SF1">
    <property type="entry name" value="RNA-BINDING PROTEIN HFQ"/>
    <property type="match status" value="1"/>
</dbReference>
<dbReference type="Pfam" id="PF17209">
    <property type="entry name" value="Hfq"/>
    <property type="match status" value="1"/>
</dbReference>
<dbReference type="SUPFAM" id="SSF50182">
    <property type="entry name" value="Sm-like ribonucleoproteins"/>
    <property type="match status" value="1"/>
</dbReference>
<dbReference type="PROSITE" id="PS52002">
    <property type="entry name" value="SM"/>
    <property type="match status" value="1"/>
</dbReference>
<keyword id="KW-0694">RNA-binding</keyword>
<keyword id="KW-0346">Stress response</keyword>
<accession>Q5X0L0</accession>
<evidence type="ECO:0000255" key="1">
    <source>
        <dbReference type="HAMAP-Rule" id="MF_00436"/>
    </source>
</evidence>
<evidence type="ECO:0000255" key="2">
    <source>
        <dbReference type="PROSITE-ProRule" id="PRU01346"/>
    </source>
</evidence>
<organism>
    <name type="scientific">Legionella pneumophila (strain Lens)</name>
    <dbReference type="NCBI Taxonomy" id="297245"/>
    <lineage>
        <taxon>Bacteria</taxon>
        <taxon>Pseudomonadati</taxon>
        <taxon>Pseudomonadota</taxon>
        <taxon>Gammaproteobacteria</taxon>
        <taxon>Legionellales</taxon>
        <taxon>Legionellaceae</taxon>
        <taxon>Legionella</taxon>
    </lineage>
</organism>
<name>HFQ_LEGPL</name>
<feature type="chain" id="PRO_0000095646" description="RNA-binding protein Hfq">
    <location>
        <begin position="1"/>
        <end position="85"/>
    </location>
</feature>
<feature type="domain" description="Sm" evidence="2">
    <location>
        <begin position="9"/>
        <end position="68"/>
    </location>
</feature>
<proteinExistence type="inferred from homology"/>
<comment type="function">
    <text evidence="1">RNA chaperone that binds small regulatory RNA (sRNAs) and mRNAs to facilitate mRNA translational regulation in response to envelope stress, environmental stress and changes in metabolite concentrations. Also binds with high specificity to tRNAs.</text>
</comment>
<comment type="subunit">
    <text evidence="1">Homohexamer.</text>
</comment>
<comment type="similarity">
    <text evidence="1">Belongs to the Hfq family.</text>
</comment>
<protein>
    <recommendedName>
        <fullName evidence="1">RNA-binding protein Hfq</fullName>
    </recommendedName>
</protein>
<sequence length="85" mass="9528">MSKNHLLQDPFLNELRKEKVPVSVFLVNGIKLHGIIDSFDQYVVMLKNSITQMVYKHAISTVVPSRMVKIPAEESSGEEEGTVAD</sequence>
<gene>
    <name evidence="1" type="primary">hfq</name>
    <name type="ordered locus">lpl0009</name>
</gene>